<name>RS10_STRPC</name>
<keyword id="KW-0687">Ribonucleoprotein</keyword>
<keyword id="KW-0689">Ribosomal protein</keyword>
<comment type="function">
    <text evidence="1">Involved in the binding of tRNA to the ribosomes.</text>
</comment>
<comment type="subunit">
    <text evidence="1">Part of the 30S ribosomal subunit.</text>
</comment>
<comment type="similarity">
    <text evidence="1">Belongs to the universal ribosomal protein uS10 family.</text>
</comment>
<dbReference type="EMBL" id="CP000259">
    <property type="protein sequence ID" value="ABF31231.1"/>
    <property type="molecule type" value="Genomic_DNA"/>
</dbReference>
<dbReference type="RefSeq" id="WP_002987737.1">
    <property type="nucleotide sequence ID" value="NC_008021.1"/>
</dbReference>
<dbReference type="SMR" id="Q1JP18"/>
<dbReference type="KEGG" id="spk:MGAS9429_Spy0043"/>
<dbReference type="HOGENOM" id="CLU_122625_1_3_9"/>
<dbReference type="Proteomes" id="UP000002433">
    <property type="component" value="Chromosome"/>
</dbReference>
<dbReference type="GO" id="GO:1990904">
    <property type="term" value="C:ribonucleoprotein complex"/>
    <property type="evidence" value="ECO:0007669"/>
    <property type="project" value="UniProtKB-KW"/>
</dbReference>
<dbReference type="GO" id="GO:0005840">
    <property type="term" value="C:ribosome"/>
    <property type="evidence" value="ECO:0007669"/>
    <property type="project" value="UniProtKB-KW"/>
</dbReference>
<dbReference type="GO" id="GO:0003735">
    <property type="term" value="F:structural constituent of ribosome"/>
    <property type="evidence" value="ECO:0007669"/>
    <property type="project" value="InterPro"/>
</dbReference>
<dbReference type="GO" id="GO:0000049">
    <property type="term" value="F:tRNA binding"/>
    <property type="evidence" value="ECO:0007669"/>
    <property type="project" value="UniProtKB-UniRule"/>
</dbReference>
<dbReference type="GO" id="GO:0006412">
    <property type="term" value="P:translation"/>
    <property type="evidence" value="ECO:0007669"/>
    <property type="project" value="UniProtKB-UniRule"/>
</dbReference>
<dbReference type="FunFam" id="3.30.70.600:FF:000001">
    <property type="entry name" value="30S ribosomal protein S10"/>
    <property type="match status" value="1"/>
</dbReference>
<dbReference type="Gene3D" id="3.30.70.600">
    <property type="entry name" value="Ribosomal protein S10 domain"/>
    <property type="match status" value="1"/>
</dbReference>
<dbReference type="HAMAP" id="MF_00508">
    <property type="entry name" value="Ribosomal_uS10"/>
    <property type="match status" value="1"/>
</dbReference>
<dbReference type="InterPro" id="IPR001848">
    <property type="entry name" value="Ribosomal_uS10"/>
</dbReference>
<dbReference type="InterPro" id="IPR018268">
    <property type="entry name" value="Ribosomal_uS10_CS"/>
</dbReference>
<dbReference type="InterPro" id="IPR027486">
    <property type="entry name" value="Ribosomal_uS10_dom"/>
</dbReference>
<dbReference type="InterPro" id="IPR036838">
    <property type="entry name" value="Ribosomal_uS10_dom_sf"/>
</dbReference>
<dbReference type="NCBIfam" id="NF001861">
    <property type="entry name" value="PRK00596.1"/>
    <property type="match status" value="1"/>
</dbReference>
<dbReference type="NCBIfam" id="TIGR01049">
    <property type="entry name" value="rpsJ_bact"/>
    <property type="match status" value="1"/>
</dbReference>
<dbReference type="PANTHER" id="PTHR11700">
    <property type="entry name" value="30S RIBOSOMAL PROTEIN S10 FAMILY MEMBER"/>
    <property type="match status" value="1"/>
</dbReference>
<dbReference type="Pfam" id="PF00338">
    <property type="entry name" value="Ribosomal_S10"/>
    <property type="match status" value="1"/>
</dbReference>
<dbReference type="PRINTS" id="PR00971">
    <property type="entry name" value="RIBOSOMALS10"/>
</dbReference>
<dbReference type="SMART" id="SM01403">
    <property type="entry name" value="Ribosomal_S10"/>
    <property type="match status" value="1"/>
</dbReference>
<dbReference type="SUPFAM" id="SSF54999">
    <property type="entry name" value="Ribosomal protein S10"/>
    <property type="match status" value="1"/>
</dbReference>
<dbReference type="PROSITE" id="PS00361">
    <property type="entry name" value="RIBOSOMAL_S10"/>
    <property type="match status" value="1"/>
</dbReference>
<evidence type="ECO:0000255" key="1">
    <source>
        <dbReference type="HAMAP-Rule" id="MF_00508"/>
    </source>
</evidence>
<evidence type="ECO:0000305" key="2"/>
<gene>
    <name evidence="1" type="primary">rpsJ</name>
    <name type="ordered locus">MGAS9429_Spy0043</name>
</gene>
<organism>
    <name type="scientific">Streptococcus pyogenes serotype M12 (strain MGAS9429)</name>
    <dbReference type="NCBI Taxonomy" id="370551"/>
    <lineage>
        <taxon>Bacteria</taxon>
        <taxon>Bacillati</taxon>
        <taxon>Bacillota</taxon>
        <taxon>Bacilli</taxon>
        <taxon>Lactobacillales</taxon>
        <taxon>Streptococcaceae</taxon>
        <taxon>Streptococcus</taxon>
    </lineage>
</organism>
<accession>Q1JP18</accession>
<reference key="1">
    <citation type="journal article" date="2006" name="Proc. Natl. Acad. Sci. U.S.A.">
        <title>Molecular genetic anatomy of inter- and intraserotype variation in the human bacterial pathogen group A Streptococcus.</title>
        <authorList>
            <person name="Beres S.B."/>
            <person name="Richter E.W."/>
            <person name="Nagiec M.J."/>
            <person name="Sumby P."/>
            <person name="Porcella S.F."/>
            <person name="DeLeo F.R."/>
            <person name="Musser J.M."/>
        </authorList>
    </citation>
    <scope>NUCLEOTIDE SEQUENCE [LARGE SCALE GENOMIC DNA]</scope>
    <source>
        <strain>MGAS9429</strain>
    </source>
</reference>
<feature type="chain" id="PRO_0000258576" description="Small ribosomal subunit protein uS10">
    <location>
        <begin position="1"/>
        <end position="102"/>
    </location>
</feature>
<sequence>MANKKIRIRLKAYEHRTLDTAAEKIVETATRTGAKVAGPVPLPTERSLYTIIRATHKYKDSREQFEMRTHKRLVDIINPTQKTVDALMKLDLPSGVNVEIKL</sequence>
<proteinExistence type="inferred from homology"/>
<protein>
    <recommendedName>
        <fullName evidence="1">Small ribosomal subunit protein uS10</fullName>
    </recommendedName>
    <alternativeName>
        <fullName evidence="2">30S ribosomal protein S10</fullName>
    </alternativeName>
</protein>